<feature type="chain" id="PRO_0000143722" description="Maturase K">
    <location>
        <begin position="1"/>
        <end position="503"/>
    </location>
</feature>
<organism>
    <name type="scientific">Stangeria eriopus</name>
    <name type="common">Natal grass cycad</name>
    <name type="synonym">Lomaria eriopus</name>
    <dbReference type="NCBI Taxonomy" id="34343"/>
    <lineage>
        <taxon>Eukaryota</taxon>
        <taxon>Viridiplantae</taxon>
        <taxon>Streptophyta</taxon>
        <taxon>Embryophyta</taxon>
        <taxon>Tracheophyta</taxon>
        <taxon>Spermatophyta</taxon>
        <taxon>Cycadidae</taxon>
        <taxon>Cycadales</taxon>
        <taxon>Zamiaceae</taxon>
        <taxon>Stangeria</taxon>
    </lineage>
</organism>
<reference key="1">
    <citation type="submission" date="2000-06" db="EMBL/GenBank/DDBJ databases">
        <title>Chloroplast matK sequence data reconfirm the monophyly of extant gymnosperms and the coniferophytic origin of Gnetales.</title>
        <authorList>
            <person name="Chaw S.-M."/>
            <person name="Hu S.-H."/>
        </authorList>
    </citation>
    <scope>NUCLEOTIDE SEQUENCE [GENOMIC DNA]</scope>
</reference>
<protein>
    <recommendedName>
        <fullName evidence="1">Maturase K</fullName>
    </recommendedName>
    <alternativeName>
        <fullName evidence="1">Intron maturase</fullName>
    </alternativeName>
</protein>
<accession>Q8MEX5</accession>
<proteinExistence type="inferred from homology"/>
<comment type="function">
    <text evidence="1">Usually encoded in the trnK tRNA gene intron. Probably assists in splicing its own and other chloroplast group II introns.</text>
</comment>
<comment type="subcellular location">
    <subcellularLocation>
        <location>Plastid</location>
        <location>Chloroplast</location>
    </subcellularLocation>
</comment>
<comment type="similarity">
    <text evidence="1">Belongs to the intron maturase 2 family. MatK subfamily.</text>
</comment>
<name>MATK_STAER</name>
<geneLocation type="chloroplast"/>
<evidence type="ECO:0000255" key="1">
    <source>
        <dbReference type="HAMAP-Rule" id="MF_01390"/>
    </source>
</evidence>
<dbReference type="EMBL" id="AF279803">
    <property type="protein sequence ID" value="AAK69126.1"/>
    <property type="molecule type" value="Genomic_DNA"/>
</dbReference>
<dbReference type="GO" id="GO:0009507">
    <property type="term" value="C:chloroplast"/>
    <property type="evidence" value="ECO:0007669"/>
    <property type="project" value="UniProtKB-SubCell"/>
</dbReference>
<dbReference type="GO" id="GO:0003723">
    <property type="term" value="F:RNA binding"/>
    <property type="evidence" value="ECO:0007669"/>
    <property type="project" value="UniProtKB-KW"/>
</dbReference>
<dbReference type="GO" id="GO:0006397">
    <property type="term" value="P:mRNA processing"/>
    <property type="evidence" value="ECO:0007669"/>
    <property type="project" value="UniProtKB-KW"/>
</dbReference>
<dbReference type="GO" id="GO:0008380">
    <property type="term" value="P:RNA splicing"/>
    <property type="evidence" value="ECO:0007669"/>
    <property type="project" value="UniProtKB-UniRule"/>
</dbReference>
<dbReference type="GO" id="GO:0008033">
    <property type="term" value="P:tRNA processing"/>
    <property type="evidence" value="ECO:0007669"/>
    <property type="project" value="UniProtKB-KW"/>
</dbReference>
<dbReference type="HAMAP" id="MF_01390">
    <property type="entry name" value="MatK"/>
    <property type="match status" value="1"/>
</dbReference>
<dbReference type="InterPro" id="IPR024937">
    <property type="entry name" value="Domain_X"/>
</dbReference>
<dbReference type="InterPro" id="IPR002866">
    <property type="entry name" value="Maturase_MatK"/>
</dbReference>
<dbReference type="InterPro" id="IPR024942">
    <property type="entry name" value="Maturase_MatK_N"/>
</dbReference>
<dbReference type="PANTHER" id="PTHR34811">
    <property type="entry name" value="MATURASE K"/>
    <property type="match status" value="1"/>
</dbReference>
<dbReference type="PANTHER" id="PTHR34811:SF1">
    <property type="entry name" value="MATURASE K"/>
    <property type="match status" value="1"/>
</dbReference>
<dbReference type="Pfam" id="PF01348">
    <property type="entry name" value="Intron_maturas2"/>
    <property type="match status" value="1"/>
</dbReference>
<dbReference type="Pfam" id="PF01824">
    <property type="entry name" value="MatK_N"/>
    <property type="match status" value="1"/>
</dbReference>
<sequence>MDKLKRDVKEETSRQPCFLYPLLFQEDLYAIAYDRHFNRSSSFEPMEDSSYNNRFSFITVKRSISRIRQQNGSIIPFVNCDQNQLVGHNRSFYYELVLGGFTAVLEVPFSIRSKHYIEGMNEWTSFRSINSIFPLMEDKIPHSNYLLEIRIPYLIHPEILVRTFRRWIQDAPFLHSLRSVLHEHRNLIISSNLDQLTLIASKEKKRLSLFLWNYYAYECESLLVPLWKRFYHSRSLSYESFIERTPFYRKIEHIDIFSHKYKHLKKSIWFLKDPSIHYMRYRESSIIALRGTYLLVKKWRYHLTNLWQCHFHLWLRPYRIYIDELSKTNNCFYFLGYLLSVKMKTSVVQIRMLDDSFITDLITKEFDPIAPTTLLIGSWAKEKFGDISGRPISRLAWTGLTDNDILDRFDRIWRNIFHYYRGSSKKDGLYRIKYILRLSCAKTLACKHKSTIRVVRERFGSELFTKSFPKERESIFLSFSKIRSQRERIWHSDIIQRNFLVNS</sequence>
<gene>
    <name evidence="1" type="primary">matK</name>
</gene>
<keyword id="KW-0150">Chloroplast</keyword>
<keyword id="KW-0507">mRNA processing</keyword>
<keyword id="KW-0934">Plastid</keyword>
<keyword id="KW-0694">RNA-binding</keyword>
<keyword id="KW-0819">tRNA processing</keyword>